<feature type="chain" id="PRO_1000144513" description="Large ribosomal subunit protein bL17">
    <location>
        <begin position="1"/>
        <end position="129"/>
    </location>
</feature>
<keyword id="KW-0687">Ribonucleoprotein</keyword>
<keyword id="KW-0689">Ribosomal protein</keyword>
<organism>
    <name type="scientific">Yersinia pseudotuberculosis serotype O:3 (strain YPIII)</name>
    <dbReference type="NCBI Taxonomy" id="502800"/>
    <lineage>
        <taxon>Bacteria</taxon>
        <taxon>Pseudomonadati</taxon>
        <taxon>Pseudomonadota</taxon>
        <taxon>Gammaproteobacteria</taxon>
        <taxon>Enterobacterales</taxon>
        <taxon>Yersiniaceae</taxon>
        <taxon>Yersinia</taxon>
    </lineage>
</organism>
<proteinExistence type="inferred from homology"/>
<protein>
    <recommendedName>
        <fullName evidence="1">Large ribosomal subunit protein bL17</fullName>
    </recommendedName>
    <alternativeName>
        <fullName evidence="2">50S ribosomal protein L17</fullName>
    </alternativeName>
</protein>
<dbReference type="EMBL" id="CP000950">
    <property type="protein sequence ID" value="ACA66622.1"/>
    <property type="molecule type" value="Genomic_DNA"/>
</dbReference>
<dbReference type="RefSeq" id="WP_002209014.1">
    <property type="nucleotide sequence ID" value="NZ_CP009792.1"/>
</dbReference>
<dbReference type="SMR" id="B1JJH1"/>
<dbReference type="GeneID" id="57974369"/>
<dbReference type="KEGG" id="ypy:YPK_0309"/>
<dbReference type="PATRIC" id="fig|502800.11.peg.916"/>
<dbReference type="GO" id="GO:0022625">
    <property type="term" value="C:cytosolic large ribosomal subunit"/>
    <property type="evidence" value="ECO:0007669"/>
    <property type="project" value="TreeGrafter"/>
</dbReference>
<dbReference type="GO" id="GO:0003735">
    <property type="term" value="F:structural constituent of ribosome"/>
    <property type="evidence" value="ECO:0007669"/>
    <property type="project" value="InterPro"/>
</dbReference>
<dbReference type="GO" id="GO:0006412">
    <property type="term" value="P:translation"/>
    <property type="evidence" value="ECO:0007669"/>
    <property type="project" value="UniProtKB-UniRule"/>
</dbReference>
<dbReference type="FunFam" id="3.90.1030.10:FF:000001">
    <property type="entry name" value="50S ribosomal protein L17"/>
    <property type="match status" value="1"/>
</dbReference>
<dbReference type="Gene3D" id="3.90.1030.10">
    <property type="entry name" value="Ribosomal protein L17"/>
    <property type="match status" value="1"/>
</dbReference>
<dbReference type="HAMAP" id="MF_01368">
    <property type="entry name" value="Ribosomal_bL17"/>
    <property type="match status" value="1"/>
</dbReference>
<dbReference type="InterPro" id="IPR000456">
    <property type="entry name" value="Ribosomal_bL17"/>
</dbReference>
<dbReference type="InterPro" id="IPR047859">
    <property type="entry name" value="Ribosomal_bL17_CS"/>
</dbReference>
<dbReference type="InterPro" id="IPR036373">
    <property type="entry name" value="Ribosomal_bL17_sf"/>
</dbReference>
<dbReference type="NCBIfam" id="TIGR00059">
    <property type="entry name" value="L17"/>
    <property type="match status" value="1"/>
</dbReference>
<dbReference type="PANTHER" id="PTHR14413:SF16">
    <property type="entry name" value="LARGE RIBOSOMAL SUBUNIT PROTEIN BL17M"/>
    <property type="match status" value="1"/>
</dbReference>
<dbReference type="PANTHER" id="PTHR14413">
    <property type="entry name" value="RIBOSOMAL PROTEIN L17"/>
    <property type="match status" value="1"/>
</dbReference>
<dbReference type="Pfam" id="PF01196">
    <property type="entry name" value="Ribosomal_L17"/>
    <property type="match status" value="1"/>
</dbReference>
<dbReference type="SUPFAM" id="SSF64263">
    <property type="entry name" value="Prokaryotic ribosomal protein L17"/>
    <property type="match status" value="1"/>
</dbReference>
<dbReference type="PROSITE" id="PS01167">
    <property type="entry name" value="RIBOSOMAL_L17"/>
    <property type="match status" value="1"/>
</dbReference>
<reference key="1">
    <citation type="submission" date="2008-02" db="EMBL/GenBank/DDBJ databases">
        <title>Complete sequence of Yersinia pseudotuberculosis YPIII.</title>
        <authorList>
            <consortium name="US DOE Joint Genome Institute"/>
            <person name="Copeland A."/>
            <person name="Lucas S."/>
            <person name="Lapidus A."/>
            <person name="Glavina del Rio T."/>
            <person name="Dalin E."/>
            <person name="Tice H."/>
            <person name="Bruce D."/>
            <person name="Goodwin L."/>
            <person name="Pitluck S."/>
            <person name="Munk A.C."/>
            <person name="Brettin T."/>
            <person name="Detter J.C."/>
            <person name="Han C."/>
            <person name="Tapia R."/>
            <person name="Schmutz J."/>
            <person name="Larimer F."/>
            <person name="Land M."/>
            <person name="Hauser L."/>
            <person name="Challacombe J.F."/>
            <person name="Green L."/>
            <person name="Lindler L.E."/>
            <person name="Nikolich M.P."/>
            <person name="Richardson P."/>
        </authorList>
    </citation>
    <scope>NUCLEOTIDE SEQUENCE [LARGE SCALE GENOMIC DNA]</scope>
    <source>
        <strain>YPIII</strain>
    </source>
</reference>
<accession>B1JJH1</accession>
<sequence length="129" mass="14532">MRHRKSGRQLNRNSSHRQAMFRNMAGSLVRHEIIKTTLPKAKELRRVVEPLITLAKTDNVANRRLAFARTRDNEIVAKLFNELGPRFASRAGGYTRILKCGFRAGDNAPMAYIELVDRAASQAEVVAAE</sequence>
<gene>
    <name evidence="1" type="primary">rplQ</name>
    <name type="ordered locus">YPK_0309</name>
</gene>
<evidence type="ECO:0000255" key="1">
    <source>
        <dbReference type="HAMAP-Rule" id="MF_01368"/>
    </source>
</evidence>
<evidence type="ECO:0000305" key="2"/>
<name>RL17_YERPY</name>
<comment type="subunit">
    <text evidence="1">Part of the 50S ribosomal subunit. Contacts protein L32.</text>
</comment>
<comment type="similarity">
    <text evidence="1">Belongs to the bacterial ribosomal protein bL17 family.</text>
</comment>